<proteinExistence type="inferred from homology"/>
<keyword id="KW-0030">Aminoacyl-tRNA synthetase</keyword>
<keyword id="KW-0067">ATP-binding</keyword>
<keyword id="KW-0963">Cytoplasm</keyword>
<keyword id="KW-0436">Ligase</keyword>
<keyword id="KW-0547">Nucleotide-binding</keyword>
<keyword id="KW-0648">Protein biosynthesis</keyword>
<keyword id="KW-1185">Reference proteome</keyword>
<organism>
    <name type="scientific">Saccharophagus degradans (strain 2-40 / ATCC 43961 / DSM 17024)</name>
    <dbReference type="NCBI Taxonomy" id="203122"/>
    <lineage>
        <taxon>Bacteria</taxon>
        <taxon>Pseudomonadati</taxon>
        <taxon>Pseudomonadota</taxon>
        <taxon>Gammaproteobacteria</taxon>
        <taxon>Cellvibrionales</taxon>
        <taxon>Cellvibrionaceae</taxon>
        <taxon>Saccharophagus</taxon>
    </lineage>
</organism>
<reference key="1">
    <citation type="journal article" date="2008" name="PLoS Genet.">
        <title>Complete genome sequence of the complex carbohydrate-degrading marine bacterium, Saccharophagus degradans strain 2-40 T.</title>
        <authorList>
            <person name="Weiner R.M."/>
            <person name="Taylor L.E. II"/>
            <person name="Henrissat B."/>
            <person name="Hauser L."/>
            <person name="Land M."/>
            <person name="Coutinho P.M."/>
            <person name="Rancurel C."/>
            <person name="Saunders E.H."/>
            <person name="Longmire A.G."/>
            <person name="Zhang H."/>
            <person name="Bayer E.A."/>
            <person name="Gilbert H.J."/>
            <person name="Larimer F."/>
            <person name="Zhulin I.B."/>
            <person name="Ekborg N.A."/>
            <person name="Lamed R."/>
            <person name="Richardson P.M."/>
            <person name="Borovok I."/>
            <person name="Hutcheson S."/>
        </authorList>
    </citation>
    <scope>NUCLEOTIDE SEQUENCE [LARGE SCALE GENOMIC DNA]</scope>
    <source>
        <strain>2-40 / ATCC 43961 / DSM 17024</strain>
    </source>
</reference>
<protein>
    <recommendedName>
        <fullName evidence="1">Glutamate--tRNA ligase</fullName>
        <ecNumber evidence="1">6.1.1.17</ecNumber>
    </recommendedName>
    <alternativeName>
        <fullName evidence="1">Glutamyl-tRNA synthetase</fullName>
        <shortName evidence="1">GluRS</shortName>
    </alternativeName>
</protein>
<feature type="chain" id="PRO_1000001954" description="Glutamate--tRNA ligase">
    <location>
        <begin position="1"/>
        <end position="503"/>
    </location>
</feature>
<feature type="short sequence motif" description="'HIGH' region" evidence="1">
    <location>
        <begin position="9"/>
        <end position="19"/>
    </location>
</feature>
<feature type="short sequence motif" description="'KMSKS' region" evidence="1">
    <location>
        <begin position="251"/>
        <end position="255"/>
    </location>
</feature>
<feature type="binding site" evidence="1">
    <location>
        <position position="254"/>
    </location>
    <ligand>
        <name>ATP</name>
        <dbReference type="ChEBI" id="CHEBI:30616"/>
    </ligand>
</feature>
<name>SYE_SACD2</name>
<sequence length="503" mass="56833">MTVRTRVAPSPTGDPHVGTAYIALFNLCFARKHGGQFILRIEDTDQSRSTPESEQAILDSLRWLGLEWDEGPDVGGAAGPYRQSERKEIYAQYVQQLLDAGHAFKCYRTTEELDMLRAARKEAGIHSALKQSDLMLTEQEQAEREAAGIPYVVRMKVPEEEGACQVTDLLRGNIDLDWSMVDAQILMKSDGMPTYHLANVVDDHLMKITHVIRGEEWINSAPKHILLYQYFGWDVPVFCHLPLLRNPDKTKLSKRKNPTSILYYKQAGYLPEALTNYLGRMGWSMPDESEKFSIQEMLNHFDIARVSLGGPVFDIEKLNWLNGLWIREDLDDAALAQRLVDWKFNQDNLLAVIPHVKQRMETLGDFLPMVSFLAANTLGITEESFKGNKLDLEDQKKVLQFALWQLDTMRTWERDDIFATLKGLADGMGIKLKDFLAPLFVAISGSTASFSVMDAMVLLGSDLSRARLRVAVEVLGGAGKKVLKRYEKEFAALSQLNEESDAE</sequence>
<accession>Q21KM1</accession>
<gene>
    <name evidence="1" type="primary">gltX</name>
    <name type="ordered locus">Sde_1496</name>
</gene>
<dbReference type="EC" id="6.1.1.17" evidence="1"/>
<dbReference type="EMBL" id="CP000282">
    <property type="protein sequence ID" value="ABD80758.1"/>
    <property type="molecule type" value="Genomic_DNA"/>
</dbReference>
<dbReference type="RefSeq" id="WP_011467978.1">
    <property type="nucleotide sequence ID" value="NC_007912.1"/>
</dbReference>
<dbReference type="SMR" id="Q21KM1"/>
<dbReference type="STRING" id="203122.Sde_1496"/>
<dbReference type="GeneID" id="98613171"/>
<dbReference type="KEGG" id="sde:Sde_1496"/>
<dbReference type="eggNOG" id="COG0008">
    <property type="taxonomic scope" value="Bacteria"/>
</dbReference>
<dbReference type="HOGENOM" id="CLU_015768_6_3_6"/>
<dbReference type="OrthoDB" id="9807503at2"/>
<dbReference type="Proteomes" id="UP000001947">
    <property type="component" value="Chromosome"/>
</dbReference>
<dbReference type="GO" id="GO:0005829">
    <property type="term" value="C:cytosol"/>
    <property type="evidence" value="ECO:0007669"/>
    <property type="project" value="TreeGrafter"/>
</dbReference>
<dbReference type="GO" id="GO:0005524">
    <property type="term" value="F:ATP binding"/>
    <property type="evidence" value="ECO:0007669"/>
    <property type="project" value="UniProtKB-UniRule"/>
</dbReference>
<dbReference type="GO" id="GO:0004818">
    <property type="term" value="F:glutamate-tRNA ligase activity"/>
    <property type="evidence" value="ECO:0007669"/>
    <property type="project" value="UniProtKB-UniRule"/>
</dbReference>
<dbReference type="GO" id="GO:0000049">
    <property type="term" value="F:tRNA binding"/>
    <property type="evidence" value="ECO:0007669"/>
    <property type="project" value="InterPro"/>
</dbReference>
<dbReference type="GO" id="GO:0008270">
    <property type="term" value="F:zinc ion binding"/>
    <property type="evidence" value="ECO:0007669"/>
    <property type="project" value="InterPro"/>
</dbReference>
<dbReference type="GO" id="GO:0006424">
    <property type="term" value="P:glutamyl-tRNA aminoacylation"/>
    <property type="evidence" value="ECO:0007669"/>
    <property type="project" value="UniProtKB-UniRule"/>
</dbReference>
<dbReference type="CDD" id="cd00808">
    <property type="entry name" value="GluRS_core"/>
    <property type="match status" value="1"/>
</dbReference>
<dbReference type="FunFam" id="3.40.50.620:FF:000045">
    <property type="entry name" value="Glutamate--tRNA ligase, mitochondrial"/>
    <property type="match status" value="1"/>
</dbReference>
<dbReference type="Gene3D" id="1.10.10.350">
    <property type="match status" value="1"/>
</dbReference>
<dbReference type="Gene3D" id="3.40.50.620">
    <property type="entry name" value="HUPs"/>
    <property type="match status" value="1"/>
</dbReference>
<dbReference type="HAMAP" id="MF_00022">
    <property type="entry name" value="Glu_tRNA_synth_type1"/>
    <property type="match status" value="1"/>
</dbReference>
<dbReference type="InterPro" id="IPR045462">
    <property type="entry name" value="aa-tRNA-synth_I_cd-bd"/>
</dbReference>
<dbReference type="InterPro" id="IPR020751">
    <property type="entry name" value="aa-tRNA-synth_I_codon-bd_sub2"/>
</dbReference>
<dbReference type="InterPro" id="IPR001412">
    <property type="entry name" value="aa-tRNA-synth_I_CS"/>
</dbReference>
<dbReference type="InterPro" id="IPR008925">
    <property type="entry name" value="aa_tRNA-synth_I_cd-bd_sf"/>
</dbReference>
<dbReference type="InterPro" id="IPR004527">
    <property type="entry name" value="Glu-tRNA-ligase_bac/mito"/>
</dbReference>
<dbReference type="InterPro" id="IPR000924">
    <property type="entry name" value="Glu/Gln-tRNA-synth"/>
</dbReference>
<dbReference type="InterPro" id="IPR020058">
    <property type="entry name" value="Glu/Gln-tRNA-synth_Ib_cat-dom"/>
</dbReference>
<dbReference type="InterPro" id="IPR049940">
    <property type="entry name" value="GluQ/Sye"/>
</dbReference>
<dbReference type="InterPro" id="IPR033910">
    <property type="entry name" value="GluRS_core"/>
</dbReference>
<dbReference type="InterPro" id="IPR014729">
    <property type="entry name" value="Rossmann-like_a/b/a_fold"/>
</dbReference>
<dbReference type="NCBIfam" id="TIGR00464">
    <property type="entry name" value="gltX_bact"/>
    <property type="match status" value="1"/>
</dbReference>
<dbReference type="PANTHER" id="PTHR43311">
    <property type="entry name" value="GLUTAMATE--TRNA LIGASE"/>
    <property type="match status" value="1"/>
</dbReference>
<dbReference type="PANTHER" id="PTHR43311:SF2">
    <property type="entry name" value="GLUTAMATE--TRNA LIGASE, MITOCHONDRIAL-RELATED"/>
    <property type="match status" value="1"/>
</dbReference>
<dbReference type="Pfam" id="PF19269">
    <property type="entry name" value="Anticodon_2"/>
    <property type="match status" value="1"/>
</dbReference>
<dbReference type="Pfam" id="PF00749">
    <property type="entry name" value="tRNA-synt_1c"/>
    <property type="match status" value="1"/>
</dbReference>
<dbReference type="PRINTS" id="PR00987">
    <property type="entry name" value="TRNASYNTHGLU"/>
</dbReference>
<dbReference type="SUPFAM" id="SSF48163">
    <property type="entry name" value="An anticodon-binding domain of class I aminoacyl-tRNA synthetases"/>
    <property type="match status" value="1"/>
</dbReference>
<dbReference type="SUPFAM" id="SSF52374">
    <property type="entry name" value="Nucleotidylyl transferase"/>
    <property type="match status" value="1"/>
</dbReference>
<dbReference type="PROSITE" id="PS00178">
    <property type="entry name" value="AA_TRNA_LIGASE_I"/>
    <property type="match status" value="1"/>
</dbReference>
<evidence type="ECO:0000255" key="1">
    <source>
        <dbReference type="HAMAP-Rule" id="MF_00022"/>
    </source>
</evidence>
<comment type="function">
    <text evidence="1">Catalyzes the attachment of glutamate to tRNA(Glu) in a two-step reaction: glutamate is first activated by ATP to form Glu-AMP and then transferred to the acceptor end of tRNA(Glu).</text>
</comment>
<comment type="catalytic activity">
    <reaction evidence="1">
        <text>tRNA(Glu) + L-glutamate + ATP = L-glutamyl-tRNA(Glu) + AMP + diphosphate</text>
        <dbReference type="Rhea" id="RHEA:23540"/>
        <dbReference type="Rhea" id="RHEA-COMP:9663"/>
        <dbReference type="Rhea" id="RHEA-COMP:9680"/>
        <dbReference type="ChEBI" id="CHEBI:29985"/>
        <dbReference type="ChEBI" id="CHEBI:30616"/>
        <dbReference type="ChEBI" id="CHEBI:33019"/>
        <dbReference type="ChEBI" id="CHEBI:78442"/>
        <dbReference type="ChEBI" id="CHEBI:78520"/>
        <dbReference type="ChEBI" id="CHEBI:456215"/>
        <dbReference type="EC" id="6.1.1.17"/>
    </reaction>
</comment>
<comment type="subunit">
    <text evidence="1">Monomer.</text>
</comment>
<comment type="subcellular location">
    <subcellularLocation>
        <location evidence="1">Cytoplasm</location>
    </subcellularLocation>
</comment>
<comment type="similarity">
    <text evidence="1">Belongs to the class-I aminoacyl-tRNA synthetase family. Glutamate--tRNA ligase type 1 subfamily.</text>
</comment>